<dbReference type="EC" id="3.1.26.4" evidence="1"/>
<dbReference type="EMBL" id="CP000915">
    <property type="protein sequence ID" value="ACD30975.1"/>
    <property type="molecule type" value="Genomic_DNA"/>
</dbReference>
<dbReference type="SMR" id="B2SGW7"/>
<dbReference type="KEGG" id="ftm:FTM_1070"/>
<dbReference type="HOGENOM" id="CLU_036532_3_2_6"/>
<dbReference type="GO" id="GO:0005737">
    <property type="term" value="C:cytoplasm"/>
    <property type="evidence" value="ECO:0007669"/>
    <property type="project" value="UniProtKB-SubCell"/>
</dbReference>
<dbReference type="GO" id="GO:0032299">
    <property type="term" value="C:ribonuclease H2 complex"/>
    <property type="evidence" value="ECO:0007669"/>
    <property type="project" value="TreeGrafter"/>
</dbReference>
<dbReference type="GO" id="GO:0030145">
    <property type="term" value="F:manganese ion binding"/>
    <property type="evidence" value="ECO:0007669"/>
    <property type="project" value="UniProtKB-UniRule"/>
</dbReference>
<dbReference type="GO" id="GO:0003723">
    <property type="term" value="F:RNA binding"/>
    <property type="evidence" value="ECO:0007669"/>
    <property type="project" value="InterPro"/>
</dbReference>
<dbReference type="GO" id="GO:0004523">
    <property type="term" value="F:RNA-DNA hybrid ribonuclease activity"/>
    <property type="evidence" value="ECO:0007669"/>
    <property type="project" value="UniProtKB-UniRule"/>
</dbReference>
<dbReference type="GO" id="GO:0043137">
    <property type="term" value="P:DNA replication, removal of RNA primer"/>
    <property type="evidence" value="ECO:0007669"/>
    <property type="project" value="TreeGrafter"/>
</dbReference>
<dbReference type="GO" id="GO:0006298">
    <property type="term" value="P:mismatch repair"/>
    <property type="evidence" value="ECO:0007669"/>
    <property type="project" value="TreeGrafter"/>
</dbReference>
<dbReference type="CDD" id="cd07182">
    <property type="entry name" value="RNase_HII_bacteria_HII_like"/>
    <property type="match status" value="1"/>
</dbReference>
<dbReference type="FunFam" id="3.30.420.10:FF:000006">
    <property type="entry name" value="Ribonuclease HII"/>
    <property type="match status" value="1"/>
</dbReference>
<dbReference type="Gene3D" id="3.30.420.10">
    <property type="entry name" value="Ribonuclease H-like superfamily/Ribonuclease H"/>
    <property type="match status" value="1"/>
</dbReference>
<dbReference type="HAMAP" id="MF_00052_B">
    <property type="entry name" value="RNase_HII_B"/>
    <property type="match status" value="1"/>
</dbReference>
<dbReference type="InterPro" id="IPR022898">
    <property type="entry name" value="RNase_HII"/>
</dbReference>
<dbReference type="InterPro" id="IPR001352">
    <property type="entry name" value="RNase_HII/HIII"/>
</dbReference>
<dbReference type="InterPro" id="IPR024567">
    <property type="entry name" value="RNase_HII/HIII_dom"/>
</dbReference>
<dbReference type="InterPro" id="IPR012337">
    <property type="entry name" value="RNaseH-like_sf"/>
</dbReference>
<dbReference type="InterPro" id="IPR036397">
    <property type="entry name" value="RNaseH_sf"/>
</dbReference>
<dbReference type="NCBIfam" id="NF000595">
    <property type="entry name" value="PRK00015.1-3"/>
    <property type="match status" value="1"/>
</dbReference>
<dbReference type="NCBIfam" id="NF000596">
    <property type="entry name" value="PRK00015.1-4"/>
    <property type="match status" value="1"/>
</dbReference>
<dbReference type="PANTHER" id="PTHR10954">
    <property type="entry name" value="RIBONUCLEASE H2 SUBUNIT A"/>
    <property type="match status" value="1"/>
</dbReference>
<dbReference type="PANTHER" id="PTHR10954:SF18">
    <property type="entry name" value="RIBONUCLEASE HII"/>
    <property type="match status" value="1"/>
</dbReference>
<dbReference type="Pfam" id="PF01351">
    <property type="entry name" value="RNase_HII"/>
    <property type="match status" value="1"/>
</dbReference>
<dbReference type="SUPFAM" id="SSF53098">
    <property type="entry name" value="Ribonuclease H-like"/>
    <property type="match status" value="1"/>
</dbReference>
<dbReference type="PROSITE" id="PS51975">
    <property type="entry name" value="RNASE_H_2"/>
    <property type="match status" value="1"/>
</dbReference>
<sequence length="187" mass="21076">MIILGIDEAGRGPLSGPVVAAGVILDQDKIIDGLADSKKLTEKKRQSLYQQIITHAKAYTIVEINPQQIDELNILQATLKAMHQVANNLERQFDKVLVDGNKLPNWDYNSEAIVKGDSKIIEISAASILAKVHRDNICLEHDRLYPQYGFAKHKGYPTKEHLENIKKYGVLDIHRKSYKPVQVLLNE</sequence>
<keyword id="KW-0963">Cytoplasm</keyword>
<keyword id="KW-0255">Endonuclease</keyword>
<keyword id="KW-0378">Hydrolase</keyword>
<keyword id="KW-0464">Manganese</keyword>
<keyword id="KW-0479">Metal-binding</keyword>
<keyword id="KW-0540">Nuclease</keyword>
<gene>
    <name evidence="1" type="primary">rnhB</name>
    <name type="ordered locus">FTM_1070</name>
</gene>
<accession>B2SGW7</accession>
<protein>
    <recommendedName>
        <fullName evidence="1">Ribonuclease HII</fullName>
        <shortName evidence="1">RNase HII</shortName>
        <ecNumber evidence="1">3.1.26.4</ecNumber>
    </recommendedName>
</protein>
<reference key="1">
    <citation type="journal article" date="2009" name="PLoS Pathog.">
        <title>Molecular evolutionary consequences of niche restriction in Francisella tularensis, a facultative intracellular pathogen.</title>
        <authorList>
            <person name="Larsson P."/>
            <person name="Elfsmark D."/>
            <person name="Svensson K."/>
            <person name="Wikstroem P."/>
            <person name="Forsman M."/>
            <person name="Brettin T."/>
            <person name="Keim P."/>
            <person name="Johansson A."/>
        </authorList>
    </citation>
    <scope>NUCLEOTIDE SEQUENCE [LARGE SCALE GENOMIC DNA]</scope>
    <source>
        <strain>FSC147</strain>
    </source>
</reference>
<evidence type="ECO:0000255" key="1">
    <source>
        <dbReference type="HAMAP-Rule" id="MF_00052"/>
    </source>
</evidence>
<evidence type="ECO:0000255" key="2">
    <source>
        <dbReference type="PROSITE-ProRule" id="PRU01319"/>
    </source>
</evidence>
<feature type="chain" id="PRO_1000091625" description="Ribonuclease HII">
    <location>
        <begin position="1"/>
        <end position="187"/>
    </location>
</feature>
<feature type="domain" description="RNase H type-2" evidence="2">
    <location>
        <begin position="1"/>
        <end position="187"/>
    </location>
</feature>
<feature type="binding site" evidence="1">
    <location>
        <position position="7"/>
    </location>
    <ligand>
        <name>a divalent metal cation</name>
        <dbReference type="ChEBI" id="CHEBI:60240"/>
    </ligand>
</feature>
<feature type="binding site" evidence="1">
    <location>
        <position position="8"/>
    </location>
    <ligand>
        <name>a divalent metal cation</name>
        <dbReference type="ChEBI" id="CHEBI:60240"/>
    </ligand>
</feature>
<feature type="binding site" evidence="1">
    <location>
        <position position="99"/>
    </location>
    <ligand>
        <name>a divalent metal cation</name>
        <dbReference type="ChEBI" id="CHEBI:60240"/>
    </ligand>
</feature>
<organism>
    <name type="scientific">Francisella tularensis subsp. mediasiatica (strain FSC147)</name>
    <dbReference type="NCBI Taxonomy" id="441952"/>
    <lineage>
        <taxon>Bacteria</taxon>
        <taxon>Pseudomonadati</taxon>
        <taxon>Pseudomonadota</taxon>
        <taxon>Gammaproteobacteria</taxon>
        <taxon>Thiotrichales</taxon>
        <taxon>Francisellaceae</taxon>
        <taxon>Francisella</taxon>
    </lineage>
</organism>
<proteinExistence type="inferred from homology"/>
<name>RNH2_FRATM</name>
<comment type="function">
    <text evidence="1">Endonuclease that specifically degrades the RNA of RNA-DNA hybrids.</text>
</comment>
<comment type="catalytic activity">
    <reaction evidence="1">
        <text>Endonucleolytic cleavage to 5'-phosphomonoester.</text>
        <dbReference type="EC" id="3.1.26.4"/>
    </reaction>
</comment>
<comment type="cofactor">
    <cofactor evidence="1">
        <name>Mn(2+)</name>
        <dbReference type="ChEBI" id="CHEBI:29035"/>
    </cofactor>
    <cofactor evidence="1">
        <name>Mg(2+)</name>
        <dbReference type="ChEBI" id="CHEBI:18420"/>
    </cofactor>
    <text evidence="1">Manganese or magnesium. Binds 1 divalent metal ion per monomer in the absence of substrate. May bind a second metal ion after substrate binding.</text>
</comment>
<comment type="subcellular location">
    <subcellularLocation>
        <location evidence="1">Cytoplasm</location>
    </subcellularLocation>
</comment>
<comment type="similarity">
    <text evidence="1">Belongs to the RNase HII family.</text>
</comment>